<sequence length="667" mass="72207">MSKQQAPNTTGIGTADLQWHSDETPYSPRFDDIYYAPTHGAEESTHVFLEGINAPACWQQRPHYTLAETGFGTGLNFLLTLDLWLATAPAHGRLHYIAVEAYPMDQAALARAHAPFAWLAPHSAALVQAWPPAVAGFHQRSLAQGRVTLTLLFGPAASMLAQLSATVDGWYLDGFAPSRNPEMWSDTLFAQLSRLSRLGTRLASFTVAGTVKRGLRAQGFTLHKAPGFGQKRECLRGVLENPLPHKPNIPPWYAPPQRSEPVSSVAIIGAGIAGAACAYACRRAGLQVTLFERHAQPGAEASGNPSGLFSPRLTAGVSLDGRFHAAAYFHALDLYAQLAQHTPEIYHPGRGLLQMAESEADVQRLQQALFHSAWPPQHAQWWDAATASQQLGTPLPRGGLWHAQAGALNPSVLCAALLADVTAHYQTEIVRLAPQPEGWTLHTAQRHYGTFDAVVIAAGATAPLLYPEAEIPNTAVQGQLSILPAANPLNQHALVFGGYLTPPYQDEQGQLCQVLGSTYRPWDDLSDCSWSECQPEAHQLVWQQLNETLPQLGQQWLGPARQGRAALRAAMKDHFPLFGPLINPSAYRTNYATLYQGKRVSLAKPAVYIDGLYLIGGLGSRGLLTAPLFGACMAALLSGGPLPLEADLWCAVHPARLLVRSLKKPPL</sequence>
<name>MNMC_MAGMM</name>
<reference key="1">
    <citation type="journal article" date="2009" name="Appl. Environ. Microbiol.">
        <title>Complete genome sequence of the chemolithoautotrophic marine magnetotactic coccus strain MC-1.</title>
        <authorList>
            <person name="Schubbe S."/>
            <person name="Williams T.J."/>
            <person name="Xie G."/>
            <person name="Kiss H.E."/>
            <person name="Brettin T.S."/>
            <person name="Martinez D."/>
            <person name="Ross C.A."/>
            <person name="Schuler D."/>
            <person name="Cox B.L."/>
            <person name="Nealson K.H."/>
            <person name="Bazylinski D.A."/>
        </authorList>
    </citation>
    <scope>NUCLEOTIDE SEQUENCE [LARGE SCALE GENOMIC DNA]</scope>
    <source>
        <strain>ATCC BAA-1437 / JCM 17883 / MC-1</strain>
    </source>
</reference>
<protein>
    <recommendedName>
        <fullName evidence="1">tRNA 5-methylaminomethyl-2-thiouridine biosynthesis bifunctional protein MnmC</fullName>
        <shortName evidence="1">tRNA mnm(5)s(2)U biosynthesis bifunctional protein</shortName>
    </recommendedName>
    <domain>
        <recommendedName>
            <fullName evidence="1">tRNA (mnm(5)s(2)U34)-methyltransferase</fullName>
            <ecNumber evidence="1">2.1.1.61</ecNumber>
        </recommendedName>
    </domain>
    <domain>
        <recommendedName>
            <fullName evidence="1">FAD-dependent cmnm(5)s(2)U34 oxidoreductase</fullName>
            <ecNumber evidence="1">1.5.-.-</ecNumber>
        </recommendedName>
    </domain>
</protein>
<proteinExistence type="inferred from homology"/>
<feature type="chain" id="PRO_0000347999" description="tRNA 5-methylaminomethyl-2-thiouridine biosynthesis bifunctional protein MnmC">
    <location>
        <begin position="1"/>
        <end position="667"/>
    </location>
</feature>
<feature type="region of interest" description="tRNA (mnm(5)s(2)U34)-methyltransferase">
    <location>
        <begin position="1"/>
        <end position="240"/>
    </location>
</feature>
<feature type="region of interest" description="Disordered" evidence="2">
    <location>
        <begin position="1"/>
        <end position="20"/>
    </location>
</feature>
<feature type="region of interest" description="FAD-dependent cmnm(5)s(2)U34 oxidoreductase">
    <location>
        <begin position="268"/>
        <end position="667"/>
    </location>
</feature>
<feature type="compositionally biased region" description="Polar residues" evidence="2">
    <location>
        <begin position="1"/>
        <end position="12"/>
    </location>
</feature>
<organism>
    <name type="scientific">Magnetococcus marinus (strain ATCC BAA-1437 / JCM 17883 / MC-1)</name>
    <dbReference type="NCBI Taxonomy" id="156889"/>
    <lineage>
        <taxon>Bacteria</taxon>
        <taxon>Pseudomonadati</taxon>
        <taxon>Pseudomonadota</taxon>
        <taxon>Alphaproteobacteria</taxon>
        <taxon>Magnetococcales</taxon>
        <taxon>Magnetococcaceae</taxon>
        <taxon>Magnetococcus</taxon>
    </lineage>
</organism>
<keyword id="KW-0963">Cytoplasm</keyword>
<keyword id="KW-0274">FAD</keyword>
<keyword id="KW-0285">Flavoprotein</keyword>
<keyword id="KW-0489">Methyltransferase</keyword>
<keyword id="KW-0511">Multifunctional enzyme</keyword>
<keyword id="KW-0560">Oxidoreductase</keyword>
<keyword id="KW-1185">Reference proteome</keyword>
<keyword id="KW-0949">S-adenosyl-L-methionine</keyword>
<keyword id="KW-0808">Transferase</keyword>
<keyword id="KW-0819">tRNA processing</keyword>
<dbReference type="EC" id="2.1.1.61" evidence="1"/>
<dbReference type="EC" id="1.5.-.-" evidence="1"/>
<dbReference type="EMBL" id="CP000471">
    <property type="protein sequence ID" value="ABK44877.1"/>
    <property type="molecule type" value="Genomic_DNA"/>
</dbReference>
<dbReference type="RefSeq" id="WP_011713997.1">
    <property type="nucleotide sequence ID" value="NC_008576.1"/>
</dbReference>
<dbReference type="SMR" id="A0LA84"/>
<dbReference type="STRING" id="156889.Mmc1_2377"/>
<dbReference type="KEGG" id="mgm:Mmc1_2377"/>
<dbReference type="eggNOG" id="COG0665">
    <property type="taxonomic scope" value="Bacteria"/>
</dbReference>
<dbReference type="eggNOG" id="COG4121">
    <property type="taxonomic scope" value="Bacteria"/>
</dbReference>
<dbReference type="HOGENOM" id="CLU_022427_1_0_5"/>
<dbReference type="OrthoDB" id="9786494at2"/>
<dbReference type="Proteomes" id="UP000002586">
    <property type="component" value="Chromosome"/>
</dbReference>
<dbReference type="GO" id="GO:0005737">
    <property type="term" value="C:cytoplasm"/>
    <property type="evidence" value="ECO:0007669"/>
    <property type="project" value="UniProtKB-SubCell"/>
</dbReference>
<dbReference type="GO" id="GO:0050660">
    <property type="term" value="F:flavin adenine dinucleotide binding"/>
    <property type="evidence" value="ECO:0007669"/>
    <property type="project" value="UniProtKB-UniRule"/>
</dbReference>
<dbReference type="GO" id="GO:0016645">
    <property type="term" value="F:oxidoreductase activity, acting on the CH-NH group of donors"/>
    <property type="evidence" value="ECO:0007669"/>
    <property type="project" value="InterPro"/>
</dbReference>
<dbReference type="GO" id="GO:0004808">
    <property type="term" value="F:tRNA (5-methylaminomethyl-2-thiouridylate)(34)-methyltransferase activity"/>
    <property type="evidence" value="ECO:0007669"/>
    <property type="project" value="UniProtKB-EC"/>
</dbReference>
<dbReference type="GO" id="GO:0032259">
    <property type="term" value="P:methylation"/>
    <property type="evidence" value="ECO:0007669"/>
    <property type="project" value="UniProtKB-KW"/>
</dbReference>
<dbReference type="GO" id="GO:0002097">
    <property type="term" value="P:tRNA wobble base modification"/>
    <property type="evidence" value="ECO:0007669"/>
    <property type="project" value="UniProtKB-UniRule"/>
</dbReference>
<dbReference type="Gene3D" id="3.30.9.10">
    <property type="entry name" value="D-Amino Acid Oxidase, subunit A, domain 2"/>
    <property type="match status" value="1"/>
</dbReference>
<dbReference type="Gene3D" id="3.50.50.60">
    <property type="entry name" value="FAD/NAD(P)-binding domain"/>
    <property type="match status" value="1"/>
</dbReference>
<dbReference type="Gene3D" id="3.40.50.150">
    <property type="entry name" value="Vaccinia Virus protein VP39"/>
    <property type="match status" value="1"/>
</dbReference>
<dbReference type="HAMAP" id="MF_01102">
    <property type="entry name" value="MnmC"/>
    <property type="match status" value="1"/>
</dbReference>
<dbReference type="InterPro" id="IPR006076">
    <property type="entry name" value="FAD-dep_OxRdtase"/>
</dbReference>
<dbReference type="InterPro" id="IPR036188">
    <property type="entry name" value="FAD/NAD-bd_sf"/>
</dbReference>
<dbReference type="InterPro" id="IPR008471">
    <property type="entry name" value="MnmC-like_methylTransf"/>
</dbReference>
<dbReference type="InterPro" id="IPR029063">
    <property type="entry name" value="SAM-dependent_MTases_sf"/>
</dbReference>
<dbReference type="InterPro" id="IPR023032">
    <property type="entry name" value="tRNA_MAMT_biosynth_bifunc_MnmC"/>
</dbReference>
<dbReference type="InterPro" id="IPR047785">
    <property type="entry name" value="tRNA_MNMC2"/>
</dbReference>
<dbReference type="InterPro" id="IPR017610">
    <property type="entry name" value="tRNA_S-uridine_synth_MnmC_C"/>
</dbReference>
<dbReference type="NCBIfam" id="TIGR03197">
    <property type="entry name" value="MnmC_Cterm"/>
    <property type="match status" value="1"/>
</dbReference>
<dbReference type="NCBIfam" id="NF002481">
    <property type="entry name" value="PRK01747.1-2"/>
    <property type="match status" value="1"/>
</dbReference>
<dbReference type="NCBIfam" id="NF033855">
    <property type="entry name" value="tRNA_MNMC2"/>
    <property type="match status" value="1"/>
</dbReference>
<dbReference type="PANTHER" id="PTHR13847">
    <property type="entry name" value="SARCOSINE DEHYDROGENASE-RELATED"/>
    <property type="match status" value="1"/>
</dbReference>
<dbReference type="PANTHER" id="PTHR13847:SF283">
    <property type="entry name" value="TRNA 5-METHYLAMINOMETHYL-2-THIOURIDINE BIOSYNTHESIS BIFUNCTIONAL PROTEIN MNMC"/>
    <property type="match status" value="1"/>
</dbReference>
<dbReference type="Pfam" id="PF01266">
    <property type="entry name" value="DAO"/>
    <property type="match status" value="1"/>
</dbReference>
<dbReference type="Pfam" id="PF05430">
    <property type="entry name" value="Methyltransf_30"/>
    <property type="match status" value="1"/>
</dbReference>
<dbReference type="SUPFAM" id="SSF51905">
    <property type="entry name" value="FAD/NAD(P)-binding domain"/>
    <property type="match status" value="1"/>
</dbReference>
<gene>
    <name evidence="1" type="primary">mnmC</name>
    <name type="ordered locus">Mmc1_2377</name>
</gene>
<accession>A0LA84</accession>
<comment type="function">
    <text evidence="1">Catalyzes the last two steps in the biosynthesis of 5-methylaminomethyl-2-thiouridine (mnm(5)s(2)U) at the wobble position (U34) in tRNA. Catalyzes the FAD-dependent demodification of cmnm(5)s(2)U34 to nm(5)s(2)U34, followed by the transfer of a methyl group from S-adenosyl-L-methionine to nm(5)s(2)U34, to form mnm(5)s(2)U34.</text>
</comment>
<comment type="catalytic activity">
    <reaction evidence="1">
        <text>5-aminomethyl-2-thiouridine(34) in tRNA + S-adenosyl-L-methionine = 5-methylaminomethyl-2-thiouridine(34) in tRNA + S-adenosyl-L-homocysteine + H(+)</text>
        <dbReference type="Rhea" id="RHEA:19569"/>
        <dbReference type="Rhea" id="RHEA-COMP:10195"/>
        <dbReference type="Rhea" id="RHEA-COMP:10197"/>
        <dbReference type="ChEBI" id="CHEBI:15378"/>
        <dbReference type="ChEBI" id="CHEBI:57856"/>
        <dbReference type="ChEBI" id="CHEBI:59789"/>
        <dbReference type="ChEBI" id="CHEBI:74454"/>
        <dbReference type="ChEBI" id="CHEBI:74455"/>
        <dbReference type="EC" id="2.1.1.61"/>
    </reaction>
</comment>
<comment type="cofactor">
    <cofactor evidence="1">
        <name>FAD</name>
        <dbReference type="ChEBI" id="CHEBI:57692"/>
    </cofactor>
</comment>
<comment type="subcellular location">
    <subcellularLocation>
        <location evidence="1">Cytoplasm</location>
    </subcellularLocation>
</comment>
<comment type="similarity">
    <text evidence="1">In the N-terminal section; belongs to the methyltransferase superfamily. tRNA (mnm(5)s(2)U34)-methyltransferase family.</text>
</comment>
<comment type="similarity">
    <text evidence="1">In the C-terminal section; belongs to the DAO family.</text>
</comment>
<evidence type="ECO:0000255" key="1">
    <source>
        <dbReference type="HAMAP-Rule" id="MF_01102"/>
    </source>
</evidence>
<evidence type="ECO:0000256" key="2">
    <source>
        <dbReference type="SAM" id="MobiDB-lite"/>
    </source>
</evidence>